<keyword id="KW-0240">DNA-directed RNA polymerase</keyword>
<keyword id="KW-0548">Nucleotidyltransferase</keyword>
<keyword id="KW-0804">Transcription</keyword>
<keyword id="KW-0808">Transferase</keyword>
<name>RPOY_STAAS</name>
<organism>
    <name type="scientific">Staphylococcus aureus (strain MSSA476)</name>
    <dbReference type="NCBI Taxonomy" id="282459"/>
    <lineage>
        <taxon>Bacteria</taxon>
        <taxon>Bacillati</taxon>
        <taxon>Bacillota</taxon>
        <taxon>Bacilli</taxon>
        <taxon>Bacillales</taxon>
        <taxon>Staphylococcaceae</taxon>
        <taxon>Staphylococcus</taxon>
    </lineage>
</organism>
<evidence type="ECO:0000255" key="1">
    <source>
        <dbReference type="HAMAP-Rule" id="MF_01553"/>
    </source>
</evidence>
<protein>
    <recommendedName>
        <fullName evidence="1">DNA-directed RNA polymerase subunit epsilon</fullName>
        <shortName evidence="1">RNAP epsilon subunit</shortName>
        <ecNumber evidence="1">2.7.7.6</ecNumber>
    </recommendedName>
    <alternativeName>
        <fullName evidence="1">RNA polymerase epsilon subunit</fullName>
    </alternativeName>
    <alternativeName>
        <fullName evidence="1">Transcriptase subunit epsilon</fullName>
    </alternativeName>
</protein>
<gene>
    <name evidence="1" type="primary">rpoY</name>
    <name type="ordered locus">SAS1025</name>
</gene>
<feature type="chain" id="PRO_0000163135" description="DNA-directed RNA polymerase subunit epsilon">
    <location>
        <begin position="1"/>
        <end position="72"/>
    </location>
</feature>
<reference key="1">
    <citation type="journal article" date="2004" name="Proc. Natl. Acad. Sci. U.S.A.">
        <title>Complete genomes of two clinical Staphylococcus aureus strains: evidence for the rapid evolution of virulence and drug resistance.</title>
        <authorList>
            <person name="Holden M.T.G."/>
            <person name="Feil E.J."/>
            <person name="Lindsay J.A."/>
            <person name="Peacock S.J."/>
            <person name="Day N.P.J."/>
            <person name="Enright M.C."/>
            <person name="Foster T.J."/>
            <person name="Moore C.E."/>
            <person name="Hurst L."/>
            <person name="Atkin R."/>
            <person name="Barron A."/>
            <person name="Bason N."/>
            <person name="Bentley S.D."/>
            <person name="Chillingworth C."/>
            <person name="Chillingworth T."/>
            <person name="Churcher C."/>
            <person name="Clark L."/>
            <person name="Corton C."/>
            <person name="Cronin A."/>
            <person name="Doggett J."/>
            <person name="Dowd L."/>
            <person name="Feltwell T."/>
            <person name="Hance Z."/>
            <person name="Harris B."/>
            <person name="Hauser H."/>
            <person name="Holroyd S."/>
            <person name="Jagels K."/>
            <person name="James K.D."/>
            <person name="Lennard N."/>
            <person name="Line A."/>
            <person name="Mayes R."/>
            <person name="Moule S."/>
            <person name="Mungall K."/>
            <person name="Ormond D."/>
            <person name="Quail M.A."/>
            <person name="Rabbinowitsch E."/>
            <person name="Rutherford K.M."/>
            <person name="Sanders M."/>
            <person name="Sharp S."/>
            <person name="Simmonds M."/>
            <person name="Stevens K."/>
            <person name="Whitehead S."/>
            <person name="Barrell B.G."/>
            <person name="Spratt B.G."/>
            <person name="Parkhill J."/>
        </authorList>
    </citation>
    <scope>NUCLEOTIDE SEQUENCE [LARGE SCALE GENOMIC DNA]</scope>
    <source>
        <strain>MSSA476</strain>
    </source>
</reference>
<dbReference type="EC" id="2.7.7.6" evidence="1"/>
<dbReference type="EMBL" id="BX571857">
    <property type="protein sequence ID" value="CAG42799.1"/>
    <property type="molecule type" value="Genomic_DNA"/>
</dbReference>
<dbReference type="RefSeq" id="WP_000257888.1">
    <property type="nucleotide sequence ID" value="NC_002953.3"/>
</dbReference>
<dbReference type="SMR" id="Q6GAC4"/>
<dbReference type="KEGG" id="sas:SAS1025"/>
<dbReference type="HOGENOM" id="CLU_187518_1_0_9"/>
<dbReference type="GO" id="GO:0000428">
    <property type="term" value="C:DNA-directed RNA polymerase complex"/>
    <property type="evidence" value="ECO:0007669"/>
    <property type="project" value="UniProtKB-KW"/>
</dbReference>
<dbReference type="GO" id="GO:0003677">
    <property type="term" value="F:DNA binding"/>
    <property type="evidence" value="ECO:0007669"/>
    <property type="project" value="UniProtKB-UniRule"/>
</dbReference>
<dbReference type="GO" id="GO:0003899">
    <property type="term" value="F:DNA-directed RNA polymerase activity"/>
    <property type="evidence" value="ECO:0007669"/>
    <property type="project" value="UniProtKB-UniRule"/>
</dbReference>
<dbReference type="GO" id="GO:0006351">
    <property type="term" value="P:DNA-templated transcription"/>
    <property type="evidence" value="ECO:0007669"/>
    <property type="project" value="UniProtKB-UniRule"/>
</dbReference>
<dbReference type="Gene3D" id="3.10.20.730">
    <property type="entry name" value="RNAP, epsilon subunit-like"/>
    <property type="match status" value="1"/>
</dbReference>
<dbReference type="HAMAP" id="MF_01553">
    <property type="entry name" value="RNApol_bact_RpoY"/>
    <property type="match status" value="1"/>
</dbReference>
<dbReference type="InterPro" id="IPR009907">
    <property type="entry name" value="RpoY"/>
</dbReference>
<dbReference type="NCBIfam" id="NF010188">
    <property type="entry name" value="PRK13667.1"/>
    <property type="match status" value="1"/>
</dbReference>
<dbReference type="Pfam" id="PF07288">
    <property type="entry name" value="RpoY"/>
    <property type="match status" value="1"/>
</dbReference>
<comment type="function">
    <text evidence="1">A non-essential component of RNA polymerase (RNAP).</text>
</comment>
<comment type="catalytic activity">
    <reaction evidence="1">
        <text>RNA(n) + a ribonucleoside 5'-triphosphate = RNA(n+1) + diphosphate</text>
        <dbReference type="Rhea" id="RHEA:21248"/>
        <dbReference type="Rhea" id="RHEA-COMP:14527"/>
        <dbReference type="Rhea" id="RHEA-COMP:17342"/>
        <dbReference type="ChEBI" id="CHEBI:33019"/>
        <dbReference type="ChEBI" id="CHEBI:61557"/>
        <dbReference type="ChEBI" id="CHEBI:140395"/>
        <dbReference type="EC" id="2.7.7.6"/>
    </reaction>
</comment>
<comment type="subunit">
    <text evidence="1">RNAP is composed of a core of 2 alpha, a beta and a beta' subunit. The core is associated with a delta subunit, and at least one of epsilon or omega. When a sigma factor is associated with the core the holoenzyme is formed, which can initiate transcription.</text>
</comment>
<comment type="similarity">
    <text evidence="1">Belongs to the RNA polymerase subunit epsilon family.</text>
</comment>
<proteinExistence type="inferred from homology"/>
<accession>Q6GAC4</accession>
<sequence length="72" mass="8752">MAVFKVFYQHNRDEVIVRENTQSLYVEAQTEEQVRRYLKDRNFNIEFITKLEGAHLDYEKENSEHFNVEIAK</sequence>